<evidence type="ECO:0000255" key="1"/>
<evidence type="ECO:0000255" key="2">
    <source>
        <dbReference type="PROSITE-ProRule" id="PRU00806"/>
    </source>
</evidence>
<evidence type="ECO:0000305" key="3"/>
<reference key="1">
    <citation type="journal article" date="2000" name="DNA Res.">
        <title>Structural analysis of Arabidopsis thaliana chromosome 5. X. Sequence features of the regions of 3,076,755 bp covered by sixty P1 and TAC clones.</title>
        <authorList>
            <person name="Sato S."/>
            <person name="Nakamura Y."/>
            <person name="Kaneko T."/>
            <person name="Katoh T."/>
            <person name="Asamizu E."/>
            <person name="Kotani H."/>
            <person name="Tabata S."/>
        </authorList>
    </citation>
    <scope>NUCLEOTIDE SEQUENCE [LARGE SCALE GENOMIC DNA]</scope>
    <source>
        <strain>cv. Columbia</strain>
    </source>
</reference>
<reference key="2">
    <citation type="journal article" date="2017" name="Plant J.">
        <title>Araport11: a complete reannotation of the Arabidopsis thaliana reference genome.</title>
        <authorList>
            <person name="Cheng C.Y."/>
            <person name="Krishnakumar V."/>
            <person name="Chan A.P."/>
            <person name="Thibaud-Nissen F."/>
            <person name="Schobel S."/>
            <person name="Town C.D."/>
        </authorList>
    </citation>
    <scope>GENOME REANNOTATION</scope>
    <source>
        <strain>cv. Columbia</strain>
    </source>
</reference>
<reference key="3">
    <citation type="journal article" date="2003" name="Science">
        <title>Empirical analysis of transcriptional activity in the Arabidopsis genome.</title>
        <authorList>
            <person name="Yamada K."/>
            <person name="Lim J."/>
            <person name="Dale J.M."/>
            <person name="Chen H."/>
            <person name="Shinn P."/>
            <person name="Palm C.J."/>
            <person name="Southwick A.M."/>
            <person name="Wu H.C."/>
            <person name="Kim C.J."/>
            <person name="Nguyen M."/>
            <person name="Pham P.K."/>
            <person name="Cheuk R.F."/>
            <person name="Karlin-Newmann G."/>
            <person name="Liu S.X."/>
            <person name="Lam B."/>
            <person name="Sakano H."/>
            <person name="Wu T."/>
            <person name="Yu G."/>
            <person name="Miranda M."/>
            <person name="Quach H.L."/>
            <person name="Tripp M."/>
            <person name="Chang C.H."/>
            <person name="Lee J.M."/>
            <person name="Toriumi M.J."/>
            <person name="Chan M.M."/>
            <person name="Tang C.C."/>
            <person name="Onodera C.S."/>
            <person name="Deng J.M."/>
            <person name="Akiyama K."/>
            <person name="Ansari Y."/>
            <person name="Arakawa T."/>
            <person name="Banh J."/>
            <person name="Banno F."/>
            <person name="Bowser L."/>
            <person name="Brooks S.Y."/>
            <person name="Carninci P."/>
            <person name="Chao Q."/>
            <person name="Choy N."/>
            <person name="Enju A."/>
            <person name="Goldsmith A.D."/>
            <person name="Gurjal M."/>
            <person name="Hansen N.F."/>
            <person name="Hayashizaki Y."/>
            <person name="Johnson-Hopson C."/>
            <person name="Hsuan V.W."/>
            <person name="Iida K."/>
            <person name="Karnes M."/>
            <person name="Khan S."/>
            <person name="Koesema E."/>
            <person name="Ishida J."/>
            <person name="Jiang P.X."/>
            <person name="Jones T."/>
            <person name="Kawai J."/>
            <person name="Kamiya A."/>
            <person name="Meyers C."/>
            <person name="Nakajima M."/>
            <person name="Narusaka M."/>
            <person name="Seki M."/>
            <person name="Sakurai T."/>
            <person name="Satou M."/>
            <person name="Tamse R."/>
            <person name="Vaysberg M."/>
            <person name="Wallender E.K."/>
            <person name="Wong C."/>
            <person name="Yamamura Y."/>
            <person name="Yuan S."/>
            <person name="Shinozaki K."/>
            <person name="Davis R.W."/>
            <person name="Theologis A."/>
            <person name="Ecker J.R."/>
        </authorList>
    </citation>
    <scope>NUCLEOTIDE SEQUENCE [LARGE SCALE MRNA]</scope>
    <source>
        <strain>cv. Columbia</strain>
    </source>
</reference>
<reference key="4">
    <citation type="journal article" date="2001" name="Plant Physiol.">
        <title>A superfamily of proteins with novel cysteine-rich repeats.</title>
        <authorList>
            <person name="Chen Z."/>
        </authorList>
    </citation>
    <scope>GENE FAMILY ORGANIZATION</scope>
    <scope>NOMENCLATURE</scope>
</reference>
<proteinExistence type="evidence at transcript level"/>
<gene>
    <name type="primary">CRRSP55</name>
    <name type="ordered locus">At5g48540</name>
    <name type="ORF">MJE7.18</name>
</gene>
<feature type="signal peptide" evidence="1">
    <location>
        <begin position="1"/>
        <end position="20"/>
    </location>
</feature>
<feature type="chain" id="PRO_0000296171" description="Cysteine-rich repeat secretory protein 55">
    <location>
        <begin position="21"/>
        <end position="263"/>
    </location>
</feature>
<feature type="domain" description="Gnk2-homologous 1" evidence="2">
    <location>
        <begin position="22"/>
        <end position="126"/>
    </location>
</feature>
<feature type="domain" description="Gnk2-homologous 2" evidence="2">
    <location>
        <begin position="132"/>
        <end position="240"/>
    </location>
</feature>
<protein>
    <recommendedName>
        <fullName>Cysteine-rich repeat secretory protein 55</fullName>
    </recommendedName>
</protein>
<accession>Q9LV60</accession>
<keyword id="KW-1185">Reference proteome</keyword>
<keyword id="KW-0677">Repeat</keyword>
<keyword id="KW-0964">Secreted</keyword>
<keyword id="KW-0732">Signal</keyword>
<name>CRR55_ARATH</name>
<dbReference type="EMBL" id="AB020745">
    <property type="protein sequence ID" value="BAA96974.1"/>
    <property type="molecule type" value="Genomic_DNA"/>
</dbReference>
<dbReference type="EMBL" id="CP002688">
    <property type="protein sequence ID" value="AED95683.1"/>
    <property type="molecule type" value="Genomic_DNA"/>
</dbReference>
<dbReference type="EMBL" id="AY050924">
    <property type="protein sequence ID" value="AAK93601.1"/>
    <property type="molecule type" value="mRNA"/>
</dbReference>
<dbReference type="EMBL" id="AY091425">
    <property type="protein sequence ID" value="AAM14364.1"/>
    <property type="molecule type" value="mRNA"/>
</dbReference>
<dbReference type="RefSeq" id="NP_199665.1">
    <property type="nucleotide sequence ID" value="NM_124230.2"/>
</dbReference>
<dbReference type="SMR" id="Q9LV60"/>
<dbReference type="FunCoup" id="Q9LV60">
    <property type="interactions" value="68"/>
</dbReference>
<dbReference type="STRING" id="3702.Q9LV60"/>
<dbReference type="PaxDb" id="3702-AT5G48540.1"/>
<dbReference type="ProteomicsDB" id="220313"/>
<dbReference type="EnsemblPlants" id="AT5G48540.1">
    <property type="protein sequence ID" value="AT5G48540.1"/>
    <property type="gene ID" value="AT5G48540"/>
</dbReference>
<dbReference type="GeneID" id="834910"/>
<dbReference type="Gramene" id="AT5G48540.1">
    <property type="protein sequence ID" value="AT5G48540.1"/>
    <property type="gene ID" value="AT5G48540"/>
</dbReference>
<dbReference type="KEGG" id="ath:AT5G48540"/>
<dbReference type="Araport" id="AT5G48540"/>
<dbReference type="TAIR" id="AT5G48540"/>
<dbReference type="eggNOG" id="ENOG502QT6G">
    <property type="taxonomic scope" value="Eukaryota"/>
</dbReference>
<dbReference type="HOGENOM" id="CLU_000288_35_0_1"/>
<dbReference type="InParanoid" id="Q9LV60"/>
<dbReference type="OMA" id="PLGEFCN"/>
<dbReference type="PhylomeDB" id="Q9LV60"/>
<dbReference type="PRO" id="PR:Q9LV60"/>
<dbReference type="Proteomes" id="UP000006548">
    <property type="component" value="Chromosome 5"/>
</dbReference>
<dbReference type="ExpressionAtlas" id="Q9LV60">
    <property type="expression patterns" value="baseline and differential"/>
</dbReference>
<dbReference type="GO" id="GO:0005576">
    <property type="term" value="C:extracellular region"/>
    <property type="evidence" value="ECO:0007669"/>
    <property type="project" value="UniProtKB-SubCell"/>
</dbReference>
<dbReference type="GO" id="GO:0099503">
    <property type="term" value="C:secretory vesicle"/>
    <property type="evidence" value="ECO:0007005"/>
    <property type="project" value="TAIR"/>
</dbReference>
<dbReference type="CDD" id="cd23509">
    <property type="entry name" value="Gnk2-like"/>
    <property type="match status" value="2"/>
</dbReference>
<dbReference type="Gene3D" id="3.30.430.20">
    <property type="entry name" value="Gnk2 domain, C-X8-C-X2-C motif"/>
    <property type="match status" value="2"/>
</dbReference>
<dbReference type="InterPro" id="IPR050581">
    <property type="entry name" value="CRR_secretory_protein"/>
</dbReference>
<dbReference type="InterPro" id="IPR002902">
    <property type="entry name" value="GNK2"/>
</dbReference>
<dbReference type="InterPro" id="IPR038408">
    <property type="entry name" value="GNK2_sf"/>
</dbReference>
<dbReference type="PANTHER" id="PTHR32411">
    <property type="entry name" value="CYSTEINE-RICH REPEAT SECRETORY PROTEIN 38-RELATED"/>
    <property type="match status" value="1"/>
</dbReference>
<dbReference type="PANTHER" id="PTHR32411:SF55">
    <property type="entry name" value="CYSTEINE-RICH REPEAT SECRETORY PROTEIN 55"/>
    <property type="match status" value="1"/>
</dbReference>
<dbReference type="Pfam" id="PF01657">
    <property type="entry name" value="Stress-antifung"/>
    <property type="match status" value="2"/>
</dbReference>
<dbReference type="PROSITE" id="PS51473">
    <property type="entry name" value="GNK2"/>
    <property type="match status" value="2"/>
</dbReference>
<sequence length="263" mass="28995">MKTLVVKCFLLLALVCSCRAADSIWQLCNTNSNISASSQVSKNIDSLLATLVSKTPSKGFKTTTSSSYNNKEKVYGLAQCRGDISNTDCSTCIQDAAKKIREVCQNQSDSRILYDFCFLRYSQENFIGKLDTGAGLIYFNVANVTEIDPKKFDNELGALFDKIRSEAVLPKNKGLGKGKTKLTPFVTLNGLVQCTRDLSELDCAQCFATAVGSFMTTCHNKKGCRVLYSSCYVRYEFYPFYFPLDPAKTGPSVGRISSVHLSP</sequence>
<organism>
    <name type="scientific">Arabidopsis thaliana</name>
    <name type="common">Mouse-ear cress</name>
    <dbReference type="NCBI Taxonomy" id="3702"/>
    <lineage>
        <taxon>Eukaryota</taxon>
        <taxon>Viridiplantae</taxon>
        <taxon>Streptophyta</taxon>
        <taxon>Embryophyta</taxon>
        <taxon>Tracheophyta</taxon>
        <taxon>Spermatophyta</taxon>
        <taxon>Magnoliopsida</taxon>
        <taxon>eudicotyledons</taxon>
        <taxon>Gunneridae</taxon>
        <taxon>Pentapetalae</taxon>
        <taxon>rosids</taxon>
        <taxon>malvids</taxon>
        <taxon>Brassicales</taxon>
        <taxon>Brassicaceae</taxon>
        <taxon>Camelineae</taxon>
        <taxon>Arabidopsis</taxon>
    </lineage>
</organism>
<comment type="subcellular location">
    <subcellularLocation>
        <location evidence="3">Secreted</location>
    </subcellularLocation>
</comment>
<comment type="similarity">
    <text evidence="3">Belongs to the cysteine-rich repeat secretory protein family.</text>
</comment>